<organism>
    <name type="scientific">Shewanella baltica (strain OS185)</name>
    <dbReference type="NCBI Taxonomy" id="402882"/>
    <lineage>
        <taxon>Bacteria</taxon>
        <taxon>Pseudomonadati</taxon>
        <taxon>Pseudomonadota</taxon>
        <taxon>Gammaproteobacteria</taxon>
        <taxon>Alteromonadales</taxon>
        <taxon>Shewanellaceae</taxon>
        <taxon>Shewanella</taxon>
    </lineage>
</organism>
<name>APAG_SHEB8</name>
<dbReference type="EMBL" id="CP000753">
    <property type="protein sequence ID" value="ABS07197.1"/>
    <property type="molecule type" value="Genomic_DNA"/>
</dbReference>
<dbReference type="RefSeq" id="WP_006080538.1">
    <property type="nucleotide sequence ID" value="NC_009665.1"/>
</dbReference>
<dbReference type="SMR" id="A6WK58"/>
<dbReference type="KEGG" id="sbm:Shew185_1045"/>
<dbReference type="HOGENOM" id="CLU_128074_0_0_6"/>
<dbReference type="GO" id="GO:0070987">
    <property type="term" value="P:error-free translesion synthesis"/>
    <property type="evidence" value="ECO:0007669"/>
    <property type="project" value="TreeGrafter"/>
</dbReference>
<dbReference type="Gene3D" id="2.60.40.1470">
    <property type="entry name" value="ApaG domain"/>
    <property type="match status" value="1"/>
</dbReference>
<dbReference type="HAMAP" id="MF_00791">
    <property type="entry name" value="ApaG"/>
    <property type="match status" value="1"/>
</dbReference>
<dbReference type="InterPro" id="IPR007474">
    <property type="entry name" value="ApaG_domain"/>
</dbReference>
<dbReference type="InterPro" id="IPR036767">
    <property type="entry name" value="ApaG_sf"/>
</dbReference>
<dbReference type="InterPro" id="IPR023065">
    <property type="entry name" value="Uncharacterised_ApaG"/>
</dbReference>
<dbReference type="NCBIfam" id="NF003967">
    <property type="entry name" value="PRK05461.1"/>
    <property type="match status" value="1"/>
</dbReference>
<dbReference type="PANTHER" id="PTHR14289">
    <property type="entry name" value="F-BOX ONLY PROTEIN 3"/>
    <property type="match status" value="1"/>
</dbReference>
<dbReference type="PANTHER" id="PTHR14289:SF16">
    <property type="entry name" value="POLYMERASE DELTA-INTERACTING PROTEIN 2"/>
    <property type="match status" value="1"/>
</dbReference>
<dbReference type="Pfam" id="PF04379">
    <property type="entry name" value="DUF525"/>
    <property type="match status" value="1"/>
</dbReference>
<dbReference type="SUPFAM" id="SSF110069">
    <property type="entry name" value="ApaG-like"/>
    <property type="match status" value="1"/>
</dbReference>
<dbReference type="PROSITE" id="PS51087">
    <property type="entry name" value="APAG"/>
    <property type="match status" value="1"/>
</dbReference>
<proteinExistence type="inferred from homology"/>
<evidence type="ECO:0000255" key="1">
    <source>
        <dbReference type="HAMAP-Rule" id="MF_00791"/>
    </source>
</evidence>
<sequence>MSALDTSIRVEVKTEYIEQQSSPEDEKYLFSYTITIINLGEQAAKLETRHWIITDANGNTSEVQGAGVVGETPTIAPNTAYQYTSGTVLDTPLGIMHGTYGMVSESGEHFQATIRPFRLATPGLLH</sequence>
<gene>
    <name evidence="1" type="primary">apaG</name>
    <name type="ordered locus">Shew185_1045</name>
</gene>
<protein>
    <recommendedName>
        <fullName evidence="1">Protein ApaG</fullName>
    </recommendedName>
</protein>
<feature type="chain" id="PRO_1000083646" description="Protein ApaG">
    <location>
        <begin position="1"/>
        <end position="126"/>
    </location>
</feature>
<feature type="domain" description="ApaG" evidence="1">
    <location>
        <begin position="2"/>
        <end position="126"/>
    </location>
</feature>
<accession>A6WK58</accession>
<reference key="1">
    <citation type="submission" date="2007-07" db="EMBL/GenBank/DDBJ databases">
        <title>Complete sequence of chromosome of Shewanella baltica OS185.</title>
        <authorList>
            <consortium name="US DOE Joint Genome Institute"/>
            <person name="Copeland A."/>
            <person name="Lucas S."/>
            <person name="Lapidus A."/>
            <person name="Barry K."/>
            <person name="Glavina del Rio T."/>
            <person name="Dalin E."/>
            <person name="Tice H."/>
            <person name="Pitluck S."/>
            <person name="Sims D."/>
            <person name="Brettin T."/>
            <person name="Bruce D."/>
            <person name="Detter J.C."/>
            <person name="Han C."/>
            <person name="Schmutz J."/>
            <person name="Larimer F."/>
            <person name="Land M."/>
            <person name="Hauser L."/>
            <person name="Kyrpides N."/>
            <person name="Mikhailova N."/>
            <person name="Brettar I."/>
            <person name="Rodrigues J."/>
            <person name="Konstantinidis K."/>
            <person name="Tiedje J."/>
            <person name="Richardson P."/>
        </authorList>
    </citation>
    <scope>NUCLEOTIDE SEQUENCE [LARGE SCALE GENOMIC DNA]</scope>
    <source>
        <strain>OS185</strain>
    </source>
</reference>